<sequence length="159" mass="17688">MNLRRKNRLWVVCAVLAGLGLTTALVLYALRANIDLFYTPGEILYGKRETQQLPAAGQRLRVGGMVMPGSVRRDPDSLKVNFSLYDAEGSVTVSYEGILPDLFREGQGVVVQGTLEKGNHVLAHEVLAKHDENYTPPEVEKAMQENHRRPQRADKDTSS</sequence>
<proteinExistence type="inferred from homology"/>
<organism>
    <name type="scientific">Salmonella typhimurium (strain LT2 / SGSC1412 / ATCC 700720)</name>
    <dbReference type="NCBI Taxonomy" id="99287"/>
    <lineage>
        <taxon>Bacteria</taxon>
        <taxon>Pseudomonadati</taxon>
        <taxon>Pseudomonadota</taxon>
        <taxon>Gammaproteobacteria</taxon>
        <taxon>Enterobacterales</taxon>
        <taxon>Enterobacteriaceae</taxon>
        <taxon>Salmonella</taxon>
    </lineage>
</organism>
<dbReference type="EMBL" id="AE006468">
    <property type="protein sequence ID" value="AAL22674.1"/>
    <property type="molecule type" value="Genomic_DNA"/>
</dbReference>
<dbReference type="EMBL" id="AE006468">
    <property type="protein sequence ID" value="AAL21152.1"/>
    <property type="molecule type" value="Genomic_DNA"/>
</dbReference>
<dbReference type="SMR" id="Q8XG35"/>
<dbReference type="STRING" id="99287.STM2250"/>
<dbReference type="PaxDb" id="99287-STM2250"/>
<dbReference type="KEGG" id="stm:STM2250"/>
<dbReference type="KEGG" id="stm:STM3815"/>
<dbReference type="PATRIC" id="fig|99287.12.peg.2384"/>
<dbReference type="HOGENOM" id="CLU_079503_1_0_6"/>
<dbReference type="OMA" id="HVEFAVH"/>
<dbReference type="PhylomeDB" id="Q8XG35"/>
<dbReference type="BioCyc" id="SENT99287:STM3815-MONOMER"/>
<dbReference type="Proteomes" id="UP000001014">
    <property type="component" value="Chromosome"/>
</dbReference>
<dbReference type="GO" id="GO:0005886">
    <property type="term" value="C:plasma membrane"/>
    <property type="evidence" value="ECO:0007669"/>
    <property type="project" value="UniProtKB-SubCell"/>
</dbReference>
<dbReference type="GO" id="GO:0020037">
    <property type="term" value="F:heme binding"/>
    <property type="evidence" value="ECO:0007669"/>
    <property type="project" value="InterPro"/>
</dbReference>
<dbReference type="GO" id="GO:0046872">
    <property type="term" value="F:metal ion binding"/>
    <property type="evidence" value="ECO:0007669"/>
    <property type="project" value="UniProtKB-KW"/>
</dbReference>
<dbReference type="GO" id="GO:0017004">
    <property type="term" value="P:cytochrome complex assembly"/>
    <property type="evidence" value="ECO:0007669"/>
    <property type="project" value="UniProtKB-KW"/>
</dbReference>
<dbReference type="FunFam" id="2.40.50.140:FF:000104">
    <property type="entry name" value="Cytochrome c-type biogenesis protein CcmE"/>
    <property type="match status" value="1"/>
</dbReference>
<dbReference type="Gene3D" id="2.40.50.140">
    <property type="entry name" value="Nucleic acid-binding proteins"/>
    <property type="match status" value="1"/>
</dbReference>
<dbReference type="HAMAP" id="MF_01959">
    <property type="entry name" value="CcmE"/>
    <property type="match status" value="1"/>
</dbReference>
<dbReference type="InterPro" id="IPR004329">
    <property type="entry name" value="CcmE"/>
</dbReference>
<dbReference type="InterPro" id="IPR036127">
    <property type="entry name" value="CcmE-like_sf"/>
</dbReference>
<dbReference type="InterPro" id="IPR012340">
    <property type="entry name" value="NA-bd_OB-fold"/>
</dbReference>
<dbReference type="NCBIfam" id="NF009635">
    <property type="entry name" value="PRK13150.1"/>
    <property type="match status" value="1"/>
</dbReference>
<dbReference type="NCBIfam" id="NF009638">
    <property type="entry name" value="PRK13165.1"/>
    <property type="match status" value="1"/>
</dbReference>
<dbReference type="NCBIfam" id="NF009727">
    <property type="entry name" value="PRK13254.1-1"/>
    <property type="match status" value="1"/>
</dbReference>
<dbReference type="NCBIfam" id="NF009729">
    <property type="entry name" value="PRK13254.1-3"/>
    <property type="match status" value="1"/>
</dbReference>
<dbReference type="PANTHER" id="PTHR34128">
    <property type="entry name" value="CYTOCHROME C-TYPE BIOGENESIS PROTEIN CCME HOMOLOG, MITOCHONDRIAL"/>
    <property type="match status" value="1"/>
</dbReference>
<dbReference type="PANTHER" id="PTHR34128:SF2">
    <property type="entry name" value="CYTOCHROME C-TYPE BIOGENESIS PROTEIN CCME HOMOLOG, MITOCHONDRIAL"/>
    <property type="match status" value="1"/>
</dbReference>
<dbReference type="Pfam" id="PF03100">
    <property type="entry name" value="CcmE"/>
    <property type="match status" value="1"/>
</dbReference>
<dbReference type="SUPFAM" id="SSF82093">
    <property type="entry name" value="Heme chaperone CcmE"/>
    <property type="match status" value="1"/>
</dbReference>
<feature type="chain" id="PRO_0000238863" description="Cytochrome c-type biogenesis protein CcmE">
    <location>
        <begin position="1"/>
        <end position="159"/>
    </location>
</feature>
<feature type="topological domain" description="Cytoplasmic" evidence="1">
    <location>
        <begin position="1"/>
        <end position="8"/>
    </location>
</feature>
<feature type="transmembrane region" description="Helical; Signal-anchor for type II membrane protein" evidence="1">
    <location>
        <begin position="9"/>
        <end position="29"/>
    </location>
</feature>
<feature type="topological domain" description="Periplasmic" evidence="1">
    <location>
        <begin position="30"/>
        <end position="159"/>
    </location>
</feature>
<feature type="region of interest" description="Disordered" evidence="2">
    <location>
        <begin position="129"/>
        <end position="159"/>
    </location>
</feature>
<feature type="binding site" description="covalent" evidence="1">
    <location>
        <position position="130"/>
    </location>
    <ligand>
        <name>heme</name>
        <dbReference type="ChEBI" id="CHEBI:30413"/>
    </ligand>
</feature>
<feature type="binding site" description="axial binding residue" evidence="1">
    <location>
        <position position="134"/>
    </location>
    <ligand>
        <name>heme</name>
        <dbReference type="ChEBI" id="CHEBI:30413"/>
    </ligand>
    <ligandPart>
        <name>Fe</name>
        <dbReference type="ChEBI" id="CHEBI:18248"/>
    </ligandPart>
</feature>
<comment type="function">
    <text evidence="1">Heme chaperone required for the biogenesis of c-type cytochromes. Transiently binds heme delivered by CcmC and transfers the heme to apo-cytochromes in a process facilitated by CcmF and CcmH.</text>
</comment>
<comment type="subcellular location">
    <subcellularLocation>
        <location evidence="1">Cell inner membrane</location>
        <topology evidence="1">Single-pass type II membrane protein</topology>
        <orientation evidence="1">Periplasmic side</orientation>
    </subcellularLocation>
</comment>
<comment type="similarity">
    <text evidence="1">Belongs to the CcmE/CycJ family.</text>
</comment>
<protein>
    <recommendedName>
        <fullName evidence="1">Cytochrome c-type biogenesis protein CcmE</fullName>
    </recommendedName>
    <alternativeName>
        <fullName evidence="1">Cytochrome c maturation protein E</fullName>
    </alternativeName>
    <alternativeName>
        <fullName evidence="1">Heme chaperone CcmE</fullName>
    </alternativeName>
</protein>
<evidence type="ECO:0000255" key="1">
    <source>
        <dbReference type="HAMAP-Rule" id="MF_01959"/>
    </source>
</evidence>
<evidence type="ECO:0000256" key="2">
    <source>
        <dbReference type="SAM" id="MobiDB-lite"/>
    </source>
</evidence>
<reference key="1">
    <citation type="journal article" date="2001" name="Nature">
        <title>Complete genome sequence of Salmonella enterica serovar Typhimurium LT2.</title>
        <authorList>
            <person name="McClelland M."/>
            <person name="Sanderson K.E."/>
            <person name="Spieth J."/>
            <person name="Clifton S.W."/>
            <person name="Latreille P."/>
            <person name="Courtney L."/>
            <person name="Porwollik S."/>
            <person name="Ali J."/>
            <person name="Dante M."/>
            <person name="Du F."/>
            <person name="Hou S."/>
            <person name="Layman D."/>
            <person name="Leonard S."/>
            <person name="Nguyen C."/>
            <person name="Scott K."/>
            <person name="Holmes A."/>
            <person name="Grewal N."/>
            <person name="Mulvaney E."/>
            <person name="Ryan E."/>
            <person name="Sun H."/>
            <person name="Florea L."/>
            <person name="Miller W."/>
            <person name="Stoneking T."/>
            <person name="Nhan M."/>
            <person name="Waterston R."/>
            <person name="Wilson R.K."/>
        </authorList>
    </citation>
    <scope>NUCLEOTIDE SEQUENCE [LARGE SCALE GENOMIC DNA]</scope>
    <source>
        <strain>LT2 / SGSC1412 / ATCC 700720</strain>
    </source>
</reference>
<gene>
    <name evidence="1" type="primary">ccmE1</name>
    <name evidence="1" type="synonym">cycJ1</name>
    <name type="ordered locus">STM2250</name>
</gene>
<gene>
    <name evidence="1" type="primary">ccmE2</name>
    <name evidence="1" type="synonym">cycJ2</name>
    <name type="ordered locus">STM3815</name>
</gene>
<accession>Q8XG35</accession>
<keyword id="KW-0997">Cell inner membrane</keyword>
<keyword id="KW-1003">Cell membrane</keyword>
<keyword id="KW-0201">Cytochrome c-type biogenesis</keyword>
<keyword id="KW-0349">Heme</keyword>
<keyword id="KW-0408">Iron</keyword>
<keyword id="KW-0472">Membrane</keyword>
<keyword id="KW-0479">Metal-binding</keyword>
<keyword id="KW-1185">Reference proteome</keyword>
<keyword id="KW-0735">Signal-anchor</keyword>
<keyword id="KW-0812">Transmembrane</keyword>
<keyword id="KW-1133">Transmembrane helix</keyword>
<name>CCME_SALTY</name>